<dbReference type="EC" id="4.1.2.4" evidence="1"/>
<dbReference type="EMBL" id="CP000948">
    <property type="protein sequence ID" value="ACB05309.1"/>
    <property type="molecule type" value="Genomic_DNA"/>
</dbReference>
<dbReference type="RefSeq" id="WP_001298497.1">
    <property type="nucleotide sequence ID" value="NC_010473.1"/>
</dbReference>
<dbReference type="SMR" id="B1XFJ1"/>
<dbReference type="GeneID" id="86862495"/>
<dbReference type="KEGG" id="ecd:ECDH10B_4539"/>
<dbReference type="HOGENOM" id="CLU_053595_3_1_6"/>
<dbReference type="UniPathway" id="UPA00002">
    <property type="reaction ID" value="UER00468"/>
</dbReference>
<dbReference type="GO" id="GO:0005737">
    <property type="term" value="C:cytoplasm"/>
    <property type="evidence" value="ECO:0007669"/>
    <property type="project" value="UniProtKB-SubCell"/>
</dbReference>
<dbReference type="GO" id="GO:0004139">
    <property type="term" value="F:deoxyribose-phosphate aldolase activity"/>
    <property type="evidence" value="ECO:0007669"/>
    <property type="project" value="UniProtKB-UniRule"/>
</dbReference>
<dbReference type="GO" id="GO:0006018">
    <property type="term" value="P:2-deoxyribose 1-phosphate catabolic process"/>
    <property type="evidence" value="ECO:0007669"/>
    <property type="project" value="UniProtKB-UniRule"/>
</dbReference>
<dbReference type="GO" id="GO:0016052">
    <property type="term" value="P:carbohydrate catabolic process"/>
    <property type="evidence" value="ECO:0007669"/>
    <property type="project" value="TreeGrafter"/>
</dbReference>
<dbReference type="GO" id="GO:0009264">
    <property type="term" value="P:deoxyribonucleotide catabolic process"/>
    <property type="evidence" value="ECO:0007669"/>
    <property type="project" value="InterPro"/>
</dbReference>
<dbReference type="CDD" id="cd00959">
    <property type="entry name" value="DeoC"/>
    <property type="match status" value="1"/>
</dbReference>
<dbReference type="FunFam" id="3.20.20.70:FF:000034">
    <property type="entry name" value="Deoxyribose-phosphate aldolase"/>
    <property type="match status" value="1"/>
</dbReference>
<dbReference type="Gene3D" id="3.20.20.70">
    <property type="entry name" value="Aldolase class I"/>
    <property type="match status" value="1"/>
</dbReference>
<dbReference type="HAMAP" id="MF_00592">
    <property type="entry name" value="DeoC_type2"/>
    <property type="match status" value="1"/>
</dbReference>
<dbReference type="InterPro" id="IPR013785">
    <property type="entry name" value="Aldolase_TIM"/>
</dbReference>
<dbReference type="InterPro" id="IPR011343">
    <property type="entry name" value="DeoC"/>
</dbReference>
<dbReference type="InterPro" id="IPR002915">
    <property type="entry name" value="DeoC/FbaB/LacD_aldolase"/>
</dbReference>
<dbReference type="InterPro" id="IPR023649">
    <property type="entry name" value="DeoC_typeII"/>
</dbReference>
<dbReference type="NCBIfam" id="TIGR00126">
    <property type="entry name" value="deoC"/>
    <property type="match status" value="1"/>
</dbReference>
<dbReference type="PANTHER" id="PTHR10889">
    <property type="entry name" value="DEOXYRIBOSE-PHOSPHATE ALDOLASE"/>
    <property type="match status" value="1"/>
</dbReference>
<dbReference type="PANTHER" id="PTHR10889:SF3">
    <property type="entry name" value="DEOXYRIBOSE-PHOSPHATE ALDOLASE"/>
    <property type="match status" value="1"/>
</dbReference>
<dbReference type="Pfam" id="PF01791">
    <property type="entry name" value="DeoC"/>
    <property type="match status" value="1"/>
</dbReference>
<dbReference type="PIRSF" id="PIRSF001357">
    <property type="entry name" value="DeoC"/>
    <property type="match status" value="1"/>
</dbReference>
<dbReference type="SMART" id="SM01133">
    <property type="entry name" value="DeoC"/>
    <property type="match status" value="1"/>
</dbReference>
<dbReference type="SUPFAM" id="SSF51569">
    <property type="entry name" value="Aldolase"/>
    <property type="match status" value="1"/>
</dbReference>
<gene>
    <name evidence="1" type="primary">deoC</name>
    <name type="ordered locus">ECDH10B_4539</name>
</gene>
<proteinExistence type="inferred from homology"/>
<accession>B1XFJ1</accession>
<evidence type="ECO:0000255" key="1">
    <source>
        <dbReference type="HAMAP-Rule" id="MF_00592"/>
    </source>
</evidence>
<reference key="1">
    <citation type="journal article" date="2008" name="J. Bacteriol.">
        <title>The complete genome sequence of Escherichia coli DH10B: insights into the biology of a laboratory workhorse.</title>
        <authorList>
            <person name="Durfee T."/>
            <person name="Nelson R."/>
            <person name="Baldwin S."/>
            <person name="Plunkett G. III"/>
            <person name="Burland V."/>
            <person name="Mau B."/>
            <person name="Petrosino J.F."/>
            <person name="Qin X."/>
            <person name="Muzny D.M."/>
            <person name="Ayele M."/>
            <person name="Gibbs R.A."/>
            <person name="Csorgo B."/>
            <person name="Posfai G."/>
            <person name="Weinstock G.M."/>
            <person name="Blattner F.R."/>
        </authorList>
    </citation>
    <scope>NUCLEOTIDE SEQUENCE [LARGE SCALE GENOMIC DNA]</scope>
    <source>
        <strain>K12 / DH10B</strain>
    </source>
</reference>
<keyword id="KW-0963">Cytoplasm</keyword>
<keyword id="KW-0456">Lyase</keyword>
<keyword id="KW-0704">Schiff base</keyword>
<sequence length="259" mass="27734">MTDLKASSLRALKLMDLTTLNDDDTDEKVIALCHQAKTPVGNTAAICIYPRFIPIARKTLKEQGTPEIRIATVTNFPHGNDDIDIALAETRAAIAYGADEVDVVFPYRALMAGNEQVGFDLVKACKEACAAANVLLKVIIETGELKDEALIRKASEISIKAGADFIKTSTGKVAVNATPESARIMMEVIRDMGVEKTVGFKPAGGVRTAEDAQKYLAIADELFGADWADARHYRFGASSLLASLLKALGHGDGKSASSY</sequence>
<organism>
    <name type="scientific">Escherichia coli (strain K12 / DH10B)</name>
    <dbReference type="NCBI Taxonomy" id="316385"/>
    <lineage>
        <taxon>Bacteria</taxon>
        <taxon>Pseudomonadati</taxon>
        <taxon>Pseudomonadota</taxon>
        <taxon>Gammaproteobacteria</taxon>
        <taxon>Enterobacterales</taxon>
        <taxon>Enterobacteriaceae</taxon>
        <taxon>Escherichia</taxon>
    </lineage>
</organism>
<feature type="chain" id="PRO_1000129803" description="Deoxyribose-phosphate aldolase">
    <location>
        <begin position="1"/>
        <end position="259"/>
    </location>
</feature>
<feature type="active site" description="Proton donor/acceptor" evidence="1">
    <location>
        <position position="102"/>
    </location>
</feature>
<feature type="active site" description="Schiff-base intermediate with acetaldehyde" evidence="1">
    <location>
        <position position="167"/>
    </location>
</feature>
<feature type="active site" description="Proton donor/acceptor" evidence="1">
    <location>
        <position position="201"/>
    </location>
</feature>
<protein>
    <recommendedName>
        <fullName evidence="1">Deoxyribose-phosphate aldolase</fullName>
        <shortName evidence="1">DERA</shortName>
        <ecNumber evidence="1">4.1.2.4</ecNumber>
    </recommendedName>
    <alternativeName>
        <fullName evidence="1">2-deoxy-D-ribose 5-phosphate aldolase</fullName>
    </alternativeName>
    <alternativeName>
        <fullName evidence="1">Phosphodeoxyriboaldolase</fullName>
        <shortName evidence="1">Deoxyriboaldolase</shortName>
    </alternativeName>
</protein>
<comment type="function">
    <text evidence="1">Catalyzes a reversible aldol reaction between acetaldehyde and D-glyceraldehyde 3-phosphate to generate 2-deoxy-D-ribose 5-phosphate.</text>
</comment>
<comment type="catalytic activity">
    <reaction evidence="1">
        <text>2-deoxy-D-ribose 5-phosphate = D-glyceraldehyde 3-phosphate + acetaldehyde</text>
        <dbReference type="Rhea" id="RHEA:12821"/>
        <dbReference type="ChEBI" id="CHEBI:15343"/>
        <dbReference type="ChEBI" id="CHEBI:59776"/>
        <dbReference type="ChEBI" id="CHEBI:62877"/>
        <dbReference type="EC" id="4.1.2.4"/>
    </reaction>
</comment>
<comment type="pathway">
    <text evidence="1">Carbohydrate degradation; 2-deoxy-D-ribose 1-phosphate degradation; D-glyceraldehyde 3-phosphate and acetaldehyde from 2-deoxy-alpha-D-ribose 1-phosphate: step 2/2.</text>
</comment>
<comment type="subcellular location">
    <subcellularLocation>
        <location evidence="1">Cytoplasm</location>
    </subcellularLocation>
</comment>
<comment type="similarity">
    <text evidence="1">Belongs to the DeoC/FbaB aldolase family. DeoC type 2 subfamily.</text>
</comment>
<name>DEOC_ECODH</name>